<organism>
    <name type="scientific">Dehalococcoides mccartyi (strain ATCC BAA-2266 / KCTC 15142 / 195)</name>
    <name type="common">Dehalococcoides ethenogenes (strain 195)</name>
    <dbReference type="NCBI Taxonomy" id="243164"/>
    <lineage>
        <taxon>Bacteria</taxon>
        <taxon>Bacillati</taxon>
        <taxon>Chloroflexota</taxon>
        <taxon>Dehalococcoidia</taxon>
        <taxon>Dehalococcoidales</taxon>
        <taxon>Dehalococcoidaceae</taxon>
        <taxon>Dehalococcoides</taxon>
    </lineage>
</organism>
<sequence length="205" mass="21884">MIQGIIGKKIGMTQIFQEDGKAQPVTLVEAGPCVVVQVKTEKQDGYEAVQLGYGKAKHITSAVKGQCRGFGEFKVLREVDVDDIAAVNVGDQITVSDFKDGEKIDASGVSRGRGFAGVVKRWHFAGGPKTHGQSDRHRAPGSISSTTTPGRIYKGKRMAGHMGNDAVTIRNLVVLKTDAEKNLLMVKGAIPGGKNTIILIKKTGK</sequence>
<name>RL3_DEHM1</name>
<dbReference type="EMBL" id="CP000027">
    <property type="protein sequence ID" value="AAW40191.1"/>
    <property type="molecule type" value="Genomic_DNA"/>
</dbReference>
<dbReference type="RefSeq" id="WP_010936251.1">
    <property type="nucleotide sequence ID" value="NC_002936.3"/>
</dbReference>
<dbReference type="SMR" id="Q3Z981"/>
<dbReference type="FunCoup" id="Q3Z981">
    <property type="interactions" value="378"/>
</dbReference>
<dbReference type="STRING" id="243164.DET0474"/>
<dbReference type="GeneID" id="3230155"/>
<dbReference type="KEGG" id="det:DET0474"/>
<dbReference type="eggNOG" id="COG0087">
    <property type="taxonomic scope" value="Bacteria"/>
</dbReference>
<dbReference type="HOGENOM" id="CLU_044142_4_1_0"/>
<dbReference type="InParanoid" id="Q3Z981"/>
<dbReference type="Proteomes" id="UP000008289">
    <property type="component" value="Chromosome"/>
</dbReference>
<dbReference type="GO" id="GO:0022625">
    <property type="term" value="C:cytosolic large ribosomal subunit"/>
    <property type="evidence" value="ECO:0007669"/>
    <property type="project" value="TreeGrafter"/>
</dbReference>
<dbReference type="GO" id="GO:0019843">
    <property type="term" value="F:rRNA binding"/>
    <property type="evidence" value="ECO:0007669"/>
    <property type="project" value="UniProtKB-UniRule"/>
</dbReference>
<dbReference type="GO" id="GO:0003735">
    <property type="term" value="F:structural constituent of ribosome"/>
    <property type="evidence" value="ECO:0007669"/>
    <property type="project" value="InterPro"/>
</dbReference>
<dbReference type="GO" id="GO:0006412">
    <property type="term" value="P:translation"/>
    <property type="evidence" value="ECO:0007669"/>
    <property type="project" value="UniProtKB-UniRule"/>
</dbReference>
<dbReference type="FunFam" id="2.40.30.10:FF:000004">
    <property type="entry name" value="50S ribosomal protein L3"/>
    <property type="match status" value="1"/>
</dbReference>
<dbReference type="Gene3D" id="2.40.30.10">
    <property type="entry name" value="Translation factors"/>
    <property type="match status" value="2"/>
</dbReference>
<dbReference type="HAMAP" id="MF_01325_B">
    <property type="entry name" value="Ribosomal_uL3_B"/>
    <property type="match status" value="1"/>
</dbReference>
<dbReference type="InterPro" id="IPR000597">
    <property type="entry name" value="Ribosomal_uL3"/>
</dbReference>
<dbReference type="InterPro" id="IPR019927">
    <property type="entry name" value="Ribosomal_uL3_bac/org-type"/>
</dbReference>
<dbReference type="InterPro" id="IPR019926">
    <property type="entry name" value="Ribosomal_uL3_CS"/>
</dbReference>
<dbReference type="InterPro" id="IPR009000">
    <property type="entry name" value="Transl_B-barrel_sf"/>
</dbReference>
<dbReference type="NCBIfam" id="TIGR03625">
    <property type="entry name" value="L3_bact"/>
    <property type="match status" value="1"/>
</dbReference>
<dbReference type="PANTHER" id="PTHR11229">
    <property type="entry name" value="50S RIBOSOMAL PROTEIN L3"/>
    <property type="match status" value="1"/>
</dbReference>
<dbReference type="PANTHER" id="PTHR11229:SF16">
    <property type="entry name" value="LARGE RIBOSOMAL SUBUNIT PROTEIN UL3C"/>
    <property type="match status" value="1"/>
</dbReference>
<dbReference type="Pfam" id="PF00297">
    <property type="entry name" value="Ribosomal_L3"/>
    <property type="match status" value="1"/>
</dbReference>
<dbReference type="SUPFAM" id="SSF50447">
    <property type="entry name" value="Translation proteins"/>
    <property type="match status" value="1"/>
</dbReference>
<dbReference type="PROSITE" id="PS00474">
    <property type="entry name" value="RIBOSOMAL_L3"/>
    <property type="match status" value="1"/>
</dbReference>
<keyword id="KW-0687">Ribonucleoprotein</keyword>
<keyword id="KW-0689">Ribosomal protein</keyword>
<keyword id="KW-0694">RNA-binding</keyword>
<keyword id="KW-0699">rRNA-binding</keyword>
<proteinExistence type="inferred from homology"/>
<feature type="chain" id="PRO_0000241338" description="Large ribosomal subunit protein uL3">
    <location>
        <begin position="1"/>
        <end position="205"/>
    </location>
</feature>
<feature type="region of interest" description="Disordered" evidence="2">
    <location>
        <begin position="126"/>
        <end position="150"/>
    </location>
</feature>
<evidence type="ECO:0000255" key="1">
    <source>
        <dbReference type="HAMAP-Rule" id="MF_01325"/>
    </source>
</evidence>
<evidence type="ECO:0000256" key="2">
    <source>
        <dbReference type="SAM" id="MobiDB-lite"/>
    </source>
</evidence>
<evidence type="ECO:0000305" key="3"/>
<comment type="function">
    <text evidence="1">One of the primary rRNA binding proteins, it binds directly near the 3'-end of the 23S rRNA, where it nucleates assembly of the 50S subunit.</text>
</comment>
<comment type="subunit">
    <text evidence="1">Part of the 50S ribosomal subunit. Forms a cluster with proteins L14 and L19.</text>
</comment>
<comment type="similarity">
    <text evidence="1">Belongs to the universal ribosomal protein uL3 family.</text>
</comment>
<accession>Q3Z981</accession>
<gene>
    <name evidence="1" type="primary">rplC</name>
    <name type="ordered locus">DET0474</name>
</gene>
<reference key="1">
    <citation type="journal article" date="2005" name="Science">
        <title>Genome sequence of the PCE-dechlorinating bacterium Dehalococcoides ethenogenes.</title>
        <authorList>
            <person name="Seshadri R."/>
            <person name="Adrian L."/>
            <person name="Fouts D.E."/>
            <person name="Eisen J.A."/>
            <person name="Phillippy A.M."/>
            <person name="Methe B.A."/>
            <person name="Ward N.L."/>
            <person name="Nelson W.C."/>
            <person name="DeBoy R.T."/>
            <person name="Khouri H.M."/>
            <person name="Kolonay J.F."/>
            <person name="Dodson R.J."/>
            <person name="Daugherty S.C."/>
            <person name="Brinkac L.M."/>
            <person name="Sullivan S.A."/>
            <person name="Madupu R."/>
            <person name="Nelson K.E."/>
            <person name="Kang K.H."/>
            <person name="Impraim M."/>
            <person name="Tran K."/>
            <person name="Robinson J.M."/>
            <person name="Forberger H.A."/>
            <person name="Fraser C.M."/>
            <person name="Zinder S.H."/>
            <person name="Heidelberg J.F."/>
        </authorList>
    </citation>
    <scope>NUCLEOTIDE SEQUENCE [LARGE SCALE GENOMIC DNA]</scope>
    <source>
        <strain>ATCC BAA-2266 / KCTC 15142 / 195</strain>
    </source>
</reference>
<protein>
    <recommendedName>
        <fullName evidence="1">Large ribosomal subunit protein uL3</fullName>
    </recommendedName>
    <alternativeName>
        <fullName evidence="3">50S ribosomal protein L3</fullName>
    </alternativeName>
</protein>